<protein>
    <recommendedName>
        <fullName evidence="2">Immunoglobulin kappa chain variable 12-41</fullName>
    </recommendedName>
    <alternativeName>
        <fullName>Ig kappa chain V-V region K2</fullName>
    </alternativeName>
</protein>
<dbReference type="EMBL" id="V00778">
    <property type="protein sequence ID" value="CAA24155.1"/>
    <property type="molecule type" value="Genomic_DNA"/>
</dbReference>
<dbReference type="PIR" id="A01918">
    <property type="entry name" value="KVMSK2"/>
</dbReference>
<dbReference type="PDB" id="1A2Y">
    <property type="method" value="X-ray"/>
    <property type="resolution" value="1.50 A"/>
    <property type="chains" value="A=21-115"/>
</dbReference>
<dbReference type="PDB" id="1A7N">
    <property type="method" value="X-ray"/>
    <property type="resolution" value="2.01 A"/>
    <property type="chains" value="L=21-115"/>
</dbReference>
<dbReference type="PDB" id="1A7O">
    <property type="method" value="X-ray"/>
    <property type="resolution" value="2.00 A"/>
    <property type="chains" value="L=21-115"/>
</dbReference>
<dbReference type="PDB" id="1A7P">
    <property type="method" value="X-ray"/>
    <property type="resolution" value="2.01 A"/>
    <property type="chains" value="L=21-115"/>
</dbReference>
<dbReference type="PDB" id="1A7Q">
    <property type="method" value="X-ray"/>
    <property type="resolution" value="2.00 A"/>
    <property type="chains" value="L=21-115"/>
</dbReference>
<dbReference type="PDB" id="1A7R">
    <property type="method" value="X-ray"/>
    <property type="resolution" value="2.01 A"/>
    <property type="chains" value="L=21-115"/>
</dbReference>
<dbReference type="PDB" id="1DVF">
    <property type="method" value="X-ray"/>
    <property type="resolution" value="1.90 A"/>
    <property type="chains" value="A=21-115"/>
</dbReference>
<dbReference type="PDB" id="1KIP">
    <property type="method" value="X-ray"/>
    <property type="resolution" value="2.10 A"/>
    <property type="chains" value="A=21-115"/>
</dbReference>
<dbReference type="PDB" id="1KIQ">
    <property type="method" value="X-ray"/>
    <property type="resolution" value="1.85 A"/>
    <property type="chains" value="A=21-115"/>
</dbReference>
<dbReference type="PDB" id="1QBL">
    <property type="method" value="X-ray"/>
    <property type="resolution" value="2.26 A"/>
    <property type="chains" value="L=21-115"/>
</dbReference>
<dbReference type="PDB" id="1QBM">
    <property type="method" value="X-ray"/>
    <property type="resolution" value="2.37 A"/>
    <property type="chains" value="L=21-115"/>
</dbReference>
<dbReference type="PDB" id="1VFA">
    <property type="method" value="X-ray"/>
    <property type="resolution" value="1.80 A"/>
    <property type="chains" value="A=21-115"/>
</dbReference>
<dbReference type="PDB" id="1VFB">
    <property type="method" value="X-ray"/>
    <property type="resolution" value="1.80 A"/>
    <property type="chains" value="A=21-115"/>
</dbReference>
<dbReference type="PDB" id="1WEJ">
    <property type="method" value="X-ray"/>
    <property type="resolution" value="1.80 A"/>
    <property type="chains" value="L=21-115"/>
</dbReference>
<dbReference type="PDBsum" id="1A2Y"/>
<dbReference type="PDBsum" id="1A7N"/>
<dbReference type="PDBsum" id="1A7O"/>
<dbReference type="PDBsum" id="1A7P"/>
<dbReference type="PDBsum" id="1A7Q"/>
<dbReference type="PDBsum" id="1A7R"/>
<dbReference type="PDBsum" id="1DVF"/>
<dbReference type="PDBsum" id="1KIP"/>
<dbReference type="PDBsum" id="1KIQ"/>
<dbReference type="PDBsum" id="1QBL"/>
<dbReference type="PDBsum" id="1QBM"/>
<dbReference type="PDBsum" id="1VFA"/>
<dbReference type="PDBsum" id="1VFB"/>
<dbReference type="PDBsum" id="1WEJ"/>
<dbReference type="EMDB" id="EMD-20584"/>
<dbReference type="EMDB" id="EMD-26660"/>
<dbReference type="EMDB" id="EMD-27541"/>
<dbReference type="EMDB" id="EMD-28941"/>
<dbReference type="EMDB" id="EMD-32967"/>
<dbReference type="EMDB" id="EMD-32968"/>
<dbReference type="EMDB" id="EMD-32969"/>
<dbReference type="EMDB" id="EMD-32980"/>
<dbReference type="EMDB" id="EMD-33000"/>
<dbReference type="EMDB" id="EMD-33001"/>
<dbReference type="EMDB" id="EMD-36406"/>
<dbReference type="EMDB" id="EMD-37290"/>
<dbReference type="EMDB" id="EMD-37301"/>
<dbReference type="EMDB" id="EMD-37302"/>
<dbReference type="EMDB" id="EMD-37945"/>
<dbReference type="EMDB" id="EMD-37946"/>
<dbReference type="EMDB" id="EMD-37947"/>
<dbReference type="EMDB" id="EMD-37950"/>
<dbReference type="EMDB" id="EMD-40935"/>
<dbReference type="EMDB" id="EMD-41642"/>
<dbReference type="EMDB" id="EMD-8754"/>
<dbReference type="EMDB" id="EMD-8761"/>
<dbReference type="EMDB" id="EMD-8762"/>
<dbReference type="EMDB" id="EMD-8763"/>
<dbReference type="SMR" id="P01635"/>
<dbReference type="FunCoup" id="P01635">
    <property type="interactions" value="691"/>
</dbReference>
<dbReference type="MINT" id="P01635"/>
<dbReference type="CPTAC" id="non-CPTAC-3653"/>
<dbReference type="jPOST" id="P01635"/>
<dbReference type="Ensembl" id="ENSMUST00000103369.2">
    <property type="protein sequence ID" value="ENSMUSP00000100170.2"/>
    <property type="gene ID" value="ENSMUSG00000095007.2"/>
</dbReference>
<dbReference type="AGR" id="MGI:4439772"/>
<dbReference type="MGI" id="MGI:4439772">
    <property type="gene designation" value="Igkv12-41"/>
</dbReference>
<dbReference type="VEuPathDB" id="HostDB:ENSMUSG00000095007"/>
<dbReference type="GeneTree" id="ENSGT00940000153924"/>
<dbReference type="HOGENOM" id="CLU_077975_4_1_1"/>
<dbReference type="InParanoid" id="P01635"/>
<dbReference type="OMA" id="VEDPGIY"/>
<dbReference type="OrthoDB" id="8908372at2759"/>
<dbReference type="EvolutionaryTrace" id="P01635"/>
<dbReference type="Proteomes" id="UP000000589">
    <property type="component" value="Chromosome 6"/>
</dbReference>
<dbReference type="RNAct" id="P01635">
    <property type="molecule type" value="protein"/>
</dbReference>
<dbReference type="Bgee" id="ENSMUSG00000095007">
    <property type="expression patterns" value="Expressed in colon and 24 other cell types or tissues"/>
</dbReference>
<dbReference type="GO" id="GO:0019814">
    <property type="term" value="C:immunoglobulin complex"/>
    <property type="evidence" value="ECO:0007669"/>
    <property type="project" value="UniProtKB-KW"/>
</dbReference>
<dbReference type="GO" id="GO:0002250">
    <property type="term" value="P:adaptive immune response"/>
    <property type="evidence" value="ECO:0007669"/>
    <property type="project" value="UniProtKB-KW"/>
</dbReference>
<dbReference type="FunFam" id="2.60.40.10:FF:000212">
    <property type="entry name" value="Immunoglobulin kappa chain variable 12-38"/>
    <property type="match status" value="1"/>
</dbReference>
<dbReference type="Gene3D" id="2.60.40.10">
    <property type="entry name" value="Immunoglobulins"/>
    <property type="match status" value="1"/>
</dbReference>
<dbReference type="InterPro" id="IPR007110">
    <property type="entry name" value="Ig-like_dom"/>
</dbReference>
<dbReference type="InterPro" id="IPR036179">
    <property type="entry name" value="Ig-like_dom_sf"/>
</dbReference>
<dbReference type="InterPro" id="IPR013783">
    <property type="entry name" value="Ig-like_fold"/>
</dbReference>
<dbReference type="InterPro" id="IPR003599">
    <property type="entry name" value="Ig_sub"/>
</dbReference>
<dbReference type="InterPro" id="IPR013106">
    <property type="entry name" value="Ig_V-set"/>
</dbReference>
<dbReference type="InterPro" id="IPR050150">
    <property type="entry name" value="IgV_Light_Chain"/>
</dbReference>
<dbReference type="PANTHER" id="PTHR23267">
    <property type="entry name" value="IMMUNOGLOBULIN LIGHT CHAIN"/>
    <property type="match status" value="1"/>
</dbReference>
<dbReference type="Pfam" id="PF07686">
    <property type="entry name" value="V-set"/>
    <property type="match status" value="1"/>
</dbReference>
<dbReference type="SMART" id="SM00409">
    <property type="entry name" value="IG"/>
    <property type="match status" value="1"/>
</dbReference>
<dbReference type="SMART" id="SM00406">
    <property type="entry name" value="IGv"/>
    <property type="match status" value="1"/>
</dbReference>
<dbReference type="SUPFAM" id="SSF48726">
    <property type="entry name" value="Immunoglobulin"/>
    <property type="match status" value="1"/>
</dbReference>
<dbReference type="PROSITE" id="PS50835">
    <property type="entry name" value="IG_LIKE"/>
    <property type="match status" value="1"/>
</dbReference>
<comment type="miscellaneous">
    <text>The gene was isolated and sequenced separately from two different sources, embryos and cultured plasmacytoma cells that secrete the similar kappa chain MOPC 149.</text>
</comment>
<gene>
    <name evidence="2" type="primary">Igkv12-41</name>
    <name evidence="2" type="synonym">Gm16848</name>
</gene>
<organism>
    <name type="scientific">Mus musculus</name>
    <name type="common">Mouse</name>
    <dbReference type="NCBI Taxonomy" id="10090"/>
    <lineage>
        <taxon>Eukaryota</taxon>
        <taxon>Metazoa</taxon>
        <taxon>Chordata</taxon>
        <taxon>Craniata</taxon>
        <taxon>Vertebrata</taxon>
        <taxon>Euteleostomi</taxon>
        <taxon>Mammalia</taxon>
        <taxon>Eutheria</taxon>
        <taxon>Euarchontoglires</taxon>
        <taxon>Glires</taxon>
        <taxon>Rodentia</taxon>
        <taxon>Myomorpha</taxon>
        <taxon>Muroidea</taxon>
        <taxon>Muridae</taxon>
        <taxon>Murinae</taxon>
        <taxon>Mus</taxon>
        <taxon>Mus</taxon>
    </lineage>
</organism>
<proteinExistence type="evidence at protein level"/>
<evidence type="ECO:0000255" key="1">
    <source>
        <dbReference type="PROSITE-ProRule" id="PRU00114"/>
    </source>
</evidence>
<evidence type="ECO:0000312" key="2">
    <source>
        <dbReference type="MGI" id="MGI:4439772"/>
    </source>
</evidence>
<evidence type="ECO:0007829" key="3">
    <source>
        <dbReference type="PDB" id="1A2Y"/>
    </source>
</evidence>
<reference key="1">
    <citation type="journal article" date="1980" name="J. Biol. Chem.">
        <title>Organization and complete sequence of identical embryonic and plasmacytoma kappa V-region genes.</title>
        <authorList>
            <person name="Nishioka Y."/>
            <person name="Leder P."/>
        </authorList>
    </citation>
    <scope>NUCLEOTIDE SEQUENCE [GENOMIC DNA]</scope>
</reference>
<keyword id="KW-0002">3D-structure</keyword>
<keyword id="KW-1064">Adaptive immunity</keyword>
<keyword id="KW-1015">Disulfide bond</keyword>
<keyword id="KW-0391">Immunity</keyword>
<keyword id="KW-1280">Immunoglobulin</keyword>
<keyword id="KW-1185">Reference proteome</keyword>
<keyword id="KW-0732">Signal</keyword>
<feature type="signal peptide">
    <location>
        <begin position="1"/>
        <end position="20"/>
    </location>
</feature>
<feature type="chain" id="PRO_0000015191" description="Immunoglobulin kappa chain variable 12-41">
    <location>
        <begin position="21"/>
        <end position="115" status="greater than"/>
    </location>
</feature>
<feature type="region of interest" description="Framework-1">
    <location>
        <begin position="21"/>
        <end position="43"/>
    </location>
</feature>
<feature type="region of interest" description="Complementarity-determining-1">
    <location>
        <begin position="44"/>
        <end position="54"/>
    </location>
</feature>
<feature type="region of interest" description="Framework-2">
    <location>
        <begin position="55"/>
        <end position="69"/>
    </location>
</feature>
<feature type="region of interest" description="Complementarity-determining-2">
    <location>
        <begin position="70"/>
        <end position="76"/>
    </location>
</feature>
<feature type="region of interest" description="Framework-3">
    <location>
        <begin position="77"/>
        <end position="108"/>
    </location>
</feature>
<feature type="region of interest" description="Complementarity-determining-3">
    <location>
        <begin position="109"/>
        <end position="115" status="greater than"/>
    </location>
</feature>
<feature type="disulfide bond" evidence="1">
    <location>
        <begin position="43"/>
        <end position="108"/>
    </location>
</feature>
<feature type="non-terminal residue">
    <location>
        <position position="115"/>
    </location>
</feature>
<feature type="strand" evidence="3">
    <location>
        <begin position="24"/>
        <end position="27"/>
    </location>
</feature>
<feature type="strand" evidence="3">
    <location>
        <begin position="29"/>
        <end position="33"/>
    </location>
</feature>
<feature type="strand" evidence="3">
    <location>
        <begin position="39"/>
        <end position="47"/>
    </location>
</feature>
<feature type="strand" evidence="3">
    <location>
        <begin position="53"/>
        <end position="58"/>
    </location>
</feature>
<feature type="strand" evidence="3">
    <location>
        <begin position="65"/>
        <end position="69"/>
    </location>
</feature>
<feature type="turn" evidence="3">
    <location>
        <begin position="70"/>
        <end position="72"/>
    </location>
</feature>
<feature type="strand" evidence="3">
    <location>
        <begin position="82"/>
        <end position="87"/>
    </location>
</feature>
<feature type="strand" evidence="3">
    <location>
        <begin position="90"/>
        <end position="97"/>
    </location>
</feature>
<feature type="helix" evidence="3">
    <location>
        <begin position="100"/>
        <end position="102"/>
    </location>
</feature>
<feature type="strand" evidence="3">
    <location>
        <begin position="104"/>
        <end position="110"/>
    </location>
</feature>
<feature type="strand" evidence="3">
    <location>
        <begin position="112"/>
        <end position="115"/>
    </location>
</feature>
<name>KV5A3_MOUSE</name>
<accession>P01635</accession>
<sequence length="115" mass="12581">MSVLTQVLALLLLWLTGARCDIQMTQSPASLSASVGETVTITCRASGNIHNYLAWYQQKQGKSPQLLVYNAKTLADGVPSRFSGSGSGTQYSLKINSLQPEDFGSYYCQHFWSTP</sequence>